<proteinExistence type="inferred from homology"/>
<dbReference type="EC" id="2.1.1.195" evidence="1"/>
<dbReference type="EMBL" id="CP000349">
    <property type="protein sequence ID" value="ABJ80510.1"/>
    <property type="molecule type" value="Genomic_DNA"/>
</dbReference>
<dbReference type="RefSeq" id="WP_011671370.1">
    <property type="nucleotide sequence ID" value="NC_008509.1"/>
</dbReference>
<dbReference type="SMR" id="Q04WN5"/>
<dbReference type="KEGG" id="lbl:LBL_4195"/>
<dbReference type="HOGENOM" id="CLU_041273_0_0_12"/>
<dbReference type="UniPathway" id="UPA00148">
    <property type="reaction ID" value="UER00227"/>
</dbReference>
<dbReference type="GO" id="GO:0043780">
    <property type="term" value="F:cobalt-precorrin-5B C1-methyltransferase activity"/>
    <property type="evidence" value="ECO:0007669"/>
    <property type="project" value="RHEA"/>
</dbReference>
<dbReference type="GO" id="GO:0019251">
    <property type="term" value="P:anaerobic cobalamin biosynthetic process"/>
    <property type="evidence" value="ECO:0007669"/>
    <property type="project" value="UniProtKB-UniRule"/>
</dbReference>
<dbReference type="GO" id="GO:0032259">
    <property type="term" value="P:methylation"/>
    <property type="evidence" value="ECO:0007669"/>
    <property type="project" value="UniProtKB-KW"/>
</dbReference>
<dbReference type="Gene3D" id="3.30.2110.10">
    <property type="entry name" value="CbiD-like"/>
    <property type="match status" value="1"/>
</dbReference>
<dbReference type="HAMAP" id="MF_00787">
    <property type="entry name" value="CbiD"/>
    <property type="match status" value="1"/>
</dbReference>
<dbReference type="InterPro" id="IPR002748">
    <property type="entry name" value="CbiD"/>
</dbReference>
<dbReference type="InterPro" id="IPR036074">
    <property type="entry name" value="CbiD_sf"/>
</dbReference>
<dbReference type="NCBIfam" id="TIGR00312">
    <property type="entry name" value="cbiD"/>
    <property type="match status" value="1"/>
</dbReference>
<dbReference type="NCBIfam" id="NF000849">
    <property type="entry name" value="PRK00075.1-1"/>
    <property type="match status" value="1"/>
</dbReference>
<dbReference type="PANTHER" id="PTHR35863">
    <property type="entry name" value="COBALT-PRECORRIN-5B C(1)-METHYLTRANSFERASE"/>
    <property type="match status" value="1"/>
</dbReference>
<dbReference type="PANTHER" id="PTHR35863:SF1">
    <property type="entry name" value="COBALT-PRECORRIN-5B C(1)-METHYLTRANSFERASE"/>
    <property type="match status" value="1"/>
</dbReference>
<dbReference type="Pfam" id="PF01888">
    <property type="entry name" value="CbiD"/>
    <property type="match status" value="1"/>
</dbReference>
<dbReference type="PIRSF" id="PIRSF026782">
    <property type="entry name" value="CbiD"/>
    <property type="match status" value="1"/>
</dbReference>
<dbReference type="SUPFAM" id="SSF111342">
    <property type="entry name" value="CbiD-like"/>
    <property type="match status" value="1"/>
</dbReference>
<evidence type="ECO:0000255" key="1">
    <source>
        <dbReference type="HAMAP-Rule" id="MF_00787"/>
    </source>
</evidence>
<protein>
    <recommendedName>
        <fullName evidence="1">Cobalt-precorrin-5B C(1)-methyltransferase</fullName>
        <ecNumber evidence="1">2.1.1.195</ecNumber>
    </recommendedName>
    <alternativeName>
        <fullName evidence="1">Cobalt-precorrin-6A synthase</fullName>
    </alternativeName>
</protein>
<gene>
    <name evidence="1" type="primary">cbiD</name>
    <name type="ordered locus">LBL_4195</name>
</gene>
<comment type="function">
    <text evidence="1">Catalyzes the methylation of C-1 in cobalt-precorrin-5B to form cobalt-precorrin-6A.</text>
</comment>
<comment type="catalytic activity">
    <reaction evidence="1">
        <text>Co-precorrin-5B + S-adenosyl-L-methionine = Co-precorrin-6A + S-adenosyl-L-homocysteine</text>
        <dbReference type="Rhea" id="RHEA:26285"/>
        <dbReference type="ChEBI" id="CHEBI:57856"/>
        <dbReference type="ChEBI" id="CHEBI:59789"/>
        <dbReference type="ChEBI" id="CHEBI:60063"/>
        <dbReference type="ChEBI" id="CHEBI:60064"/>
        <dbReference type="EC" id="2.1.1.195"/>
    </reaction>
</comment>
<comment type="pathway">
    <text evidence="1">Cofactor biosynthesis; adenosylcobalamin biosynthesis; cob(II)yrinate a,c-diamide from sirohydrochlorin (anaerobic route): step 6/10.</text>
</comment>
<comment type="similarity">
    <text evidence="1">Belongs to the CbiD family.</text>
</comment>
<sequence>MSTKELREGFTTGACSAAAAKAATRLLLKGEPVLEIETTLPNDRQVLFPVKRCQLEGEVAICSVVKDAGDDPDCTHGAELTARVRLTKESKIVLKGGDGVATVTKTGLGIEVGEPAINPIPRKNISEMILEELKGSSFNGAEVEISVPGGQEMAKKTMNKRLGLIGGISIIGTTGIVKPFSTAAFKASVIQAIRMAREYEVDTVILTTGGKSEKFAMNLFPNLKELSFIQAGDFIGTGIKTSVKEFIRHVIVVGMIGKLSKMADGVMMTHRGGSSVNTKMLSDIARSVGIPEPIAIDIQNANTARHALEICKENGYEIITTKICEIVARNCSKHAGTNMSISCYMVDFDGTLLGKFENFSQKSKLRKGI</sequence>
<accession>Q04WN5</accession>
<organism>
    <name type="scientific">Leptospira borgpetersenii serovar Hardjo-bovis (strain L550)</name>
    <dbReference type="NCBI Taxonomy" id="355276"/>
    <lineage>
        <taxon>Bacteria</taxon>
        <taxon>Pseudomonadati</taxon>
        <taxon>Spirochaetota</taxon>
        <taxon>Spirochaetia</taxon>
        <taxon>Leptospirales</taxon>
        <taxon>Leptospiraceae</taxon>
        <taxon>Leptospira</taxon>
    </lineage>
</organism>
<keyword id="KW-0169">Cobalamin biosynthesis</keyword>
<keyword id="KW-0489">Methyltransferase</keyword>
<keyword id="KW-0949">S-adenosyl-L-methionine</keyword>
<keyword id="KW-0808">Transferase</keyword>
<reference key="1">
    <citation type="journal article" date="2006" name="Proc. Natl. Acad. Sci. U.S.A.">
        <title>Genome reduction in Leptospira borgpetersenii reflects limited transmission potential.</title>
        <authorList>
            <person name="Bulach D.M."/>
            <person name="Zuerner R.L."/>
            <person name="Wilson P."/>
            <person name="Seemann T."/>
            <person name="McGrath A."/>
            <person name="Cullen P.A."/>
            <person name="Davis J."/>
            <person name="Johnson M."/>
            <person name="Kuczek E."/>
            <person name="Alt D.P."/>
            <person name="Peterson-Burch B."/>
            <person name="Coppel R.L."/>
            <person name="Rood J.I."/>
            <person name="Davies J.K."/>
            <person name="Adler B."/>
        </authorList>
    </citation>
    <scope>NUCLEOTIDE SEQUENCE [LARGE SCALE GENOMIC DNA]</scope>
    <source>
        <strain>L550</strain>
    </source>
</reference>
<name>CBID_LEPBL</name>
<feature type="chain" id="PRO_1000046860" description="Cobalt-precorrin-5B C(1)-methyltransferase">
    <location>
        <begin position="1"/>
        <end position="369"/>
    </location>
</feature>